<keyword id="KW-0227">DNA damage</keyword>
<keyword id="KW-0234">DNA repair</keyword>
<keyword id="KW-0238">DNA-binding</keyword>
<keyword id="KW-0326">Glycosidase</keyword>
<keyword id="KW-0378">Hydrolase</keyword>
<keyword id="KW-0456">Lyase</keyword>
<keyword id="KW-0479">Metal-binding</keyword>
<keyword id="KW-0511">Multifunctional enzyme</keyword>
<keyword id="KW-0862">Zinc</keyword>
<keyword id="KW-0863">Zinc-finger</keyword>
<reference key="1">
    <citation type="journal article" date="2005" name="Proc. Natl. Acad. Sci. U.S.A.">
        <title>Genome analysis of multiple pathogenic isolates of Streptococcus agalactiae: implications for the microbial 'pan-genome'.</title>
        <authorList>
            <person name="Tettelin H."/>
            <person name="Masignani V."/>
            <person name="Cieslewicz M.J."/>
            <person name="Donati C."/>
            <person name="Medini D."/>
            <person name="Ward N.L."/>
            <person name="Angiuoli S.V."/>
            <person name="Crabtree J."/>
            <person name="Jones A.L."/>
            <person name="Durkin A.S."/>
            <person name="DeBoy R.T."/>
            <person name="Davidsen T.M."/>
            <person name="Mora M."/>
            <person name="Scarselli M."/>
            <person name="Margarit y Ros I."/>
            <person name="Peterson J.D."/>
            <person name="Hauser C.R."/>
            <person name="Sundaram J.P."/>
            <person name="Nelson W.C."/>
            <person name="Madupu R."/>
            <person name="Brinkac L.M."/>
            <person name="Dodson R.J."/>
            <person name="Rosovitz M.J."/>
            <person name="Sullivan S.A."/>
            <person name="Daugherty S.C."/>
            <person name="Haft D.H."/>
            <person name="Selengut J."/>
            <person name="Gwinn M.L."/>
            <person name="Zhou L."/>
            <person name="Zafar N."/>
            <person name="Khouri H."/>
            <person name="Radune D."/>
            <person name="Dimitrov G."/>
            <person name="Watkins K."/>
            <person name="O'Connor K.J."/>
            <person name="Smith S."/>
            <person name="Utterback T.R."/>
            <person name="White O."/>
            <person name="Rubens C.E."/>
            <person name="Grandi G."/>
            <person name="Madoff L.C."/>
            <person name="Kasper D.L."/>
            <person name="Telford J.L."/>
            <person name="Wessels M.R."/>
            <person name="Rappuoli R."/>
            <person name="Fraser C.M."/>
        </authorList>
    </citation>
    <scope>NUCLEOTIDE SEQUENCE [LARGE SCALE GENOMIC DNA]</scope>
    <source>
        <strain>ATCC 27591 / A909 / CDC SS700</strain>
    </source>
</reference>
<gene>
    <name evidence="2" type="primary">mutM</name>
    <name evidence="2" type="synonym">fpg</name>
    <name type="ordered locus">SAK_1519</name>
</gene>
<protein>
    <recommendedName>
        <fullName evidence="2">Formamidopyrimidine-DNA glycosylase</fullName>
        <shortName evidence="2">Fapy-DNA glycosylase</shortName>
        <ecNumber evidence="2">3.2.2.23</ecNumber>
    </recommendedName>
    <alternativeName>
        <fullName evidence="2">DNA-(apurinic or apyrimidinic site) lyase MutM</fullName>
        <shortName evidence="2">AP lyase MutM</shortName>
        <ecNumber evidence="2">4.2.99.18</ecNumber>
    </alternativeName>
</protein>
<proteinExistence type="inferred from homology"/>
<name>FPG_STRA1</name>
<dbReference type="EC" id="3.2.2.23" evidence="2"/>
<dbReference type="EC" id="4.2.99.18" evidence="2"/>
<dbReference type="EMBL" id="CP000114">
    <property type="protein sequence ID" value="ABA46170.1"/>
    <property type="molecule type" value="Genomic_DNA"/>
</dbReference>
<dbReference type="RefSeq" id="WP_001114602.1">
    <property type="nucleotide sequence ID" value="NC_007432.1"/>
</dbReference>
<dbReference type="SMR" id="Q3K028"/>
<dbReference type="GeneID" id="66886349"/>
<dbReference type="KEGG" id="sak:SAK_1519"/>
<dbReference type="HOGENOM" id="CLU_038423_1_2_9"/>
<dbReference type="GO" id="GO:0034039">
    <property type="term" value="F:8-oxo-7,8-dihydroguanine DNA N-glycosylase activity"/>
    <property type="evidence" value="ECO:0007669"/>
    <property type="project" value="TreeGrafter"/>
</dbReference>
<dbReference type="GO" id="GO:0140078">
    <property type="term" value="F:class I DNA-(apurinic or apyrimidinic site) endonuclease activity"/>
    <property type="evidence" value="ECO:0007669"/>
    <property type="project" value="UniProtKB-EC"/>
</dbReference>
<dbReference type="GO" id="GO:0003684">
    <property type="term" value="F:damaged DNA binding"/>
    <property type="evidence" value="ECO:0007669"/>
    <property type="project" value="InterPro"/>
</dbReference>
<dbReference type="GO" id="GO:0008270">
    <property type="term" value="F:zinc ion binding"/>
    <property type="evidence" value="ECO:0007669"/>
    <property type="project" value="UniProtKB-UniRule"/>
</dbReference>
<dbReference type="GO" id="GO:0006284">
    <property type="term" value="P:base-excision repair"/>
    <property type="evidence" value="ECO:0007669"/>
    <property type="project" value="InterPro"/>
</dbReference>
<dbReference type="CDD" id="cd08966">
    <property type="entry name" value="EcFpg-like_N"/>
    <property type="match status" value="1"/>
</dbReference>
<dbReference type="FunFam" id="1.10.8.50:FF:000003">
    <property type="entry name" value="Formamidopyrimidine-DNA glycosylase"/>
    <property type="match status" value="1"/>
</dbReference>
<dbReference type="FunFam" id="3.20.190.10:FF:000001">
    <property type="entry name" value="Formamidopyrimidine-DNA glycosylase"/>
    <property type="match status" value="1"/>
</dbReference>
<dbReference type="Gene3D" id="1.10.8.50">
    <property type="match status" value="1"/>
</dbReference>
<dbReference type="Gene3D" id="3.20.190.10">
    <property type="entry name" value="MutM-like, N-terminal"/>
    <property type="match status" value="1"/>
</dbReference>
<dbReference type="HAMAP" id="MF_00103">
    <property type="entry name" value="Fapy_DNA_glycosyl"/>
    <property type="match status" value="1"/>
</dbReference>
<dbReference type="InterPro" id="IPR015886">
    <property type="entry name" value="DNA_glyclase/AP_lyase_DNA-bd"/>
</dbReference>
<dbReference type="InterPro" id="IPR015887">
    <property type="entry name" value="DNA_glyclase_Znf_dom_DNA_BS"/>
</dbReference>
<dbReference type="InterPro" id="IPR020629">
    <property type="entry name" value="Formamido-pyr_DNA_Glyclase"/>
</dbReference>
<dbReference type="InterPro" id="IPR012319">
    <property type="entry name" value="FPG_cat"/>
</dbReference>
<dbReference type="InterPro" id="IPR035937">
    <property type="entry name" value="MutM-like_N-ter"/>
</dbReference>
<dbReference type="InterPro" id="IPR010979">
    <property type="entry name" value="Ribosomal_uS13-like_H2TH"/>
</dbReference>
<dbReference type="InterPro" id="IPR000214">
    <property type="entry name" value="Znf_DNA_glyclase/AP_lyase"/>
</dbReference>
<dbReference type="InterPro" id="IPR010663">
    <property type="entry name" value="Znf_FPG/IleRS"/>
</dbReference>
<dbReference type="NCBIfam" id="TIGR00577">
    <property type="entry name" value="fpg"/>
    <property type="match status" value="1"/>
</dbReference>
<dbReference type="NCBIfam" id="NF002211">
    <property type="entry name" value="PRK01103.1"/>
    <property type="match status" value="1"/>
</dbReference>
<dbReference type="PANTHER" id="PTHR22993">
    <property type="entry name" value="FORMAMIDOPYRIMIDINE-DNA GLYCOSYLASE"/>
    <property type="match status" value="1"/>
</dbReference>
<dbReference type="PANTHER" id="PTHR22993:SF9">
    <property type="entry name" value="FORMAMIDOPYRIMIDINE-DNA GLYCOSYLASE"/>
    <property type="match status" value="1"/>
</dbReference>
<dbReference type="Pfam" id="PF01149">
    <property type="entry name" value="Fapy_DNA_glyco"/>
    <property type="match status" value="1"/>
</dbReference>
<dbReference type="Pfam" id="PF06831">
    <property type="entry name" value="H2TH"/>
    <property type="match status" value="1"/>
</dbReference>
<dbReference type="Pfam" id="PF06827">
    <property type="entry name" value="zf-FPG_IleRS"/>
    <property type="match status" value="1"/>
</dbReference>
<dbReference type="SMART" id="SM00898">
    <property type="entry name" value="Fapy_DNA_glyco"/>
    <property type="match status" value="1"/>
</dbReference>
<dbReference type="SMART" id="SM01232">
    <property type="entry name" value="H2TH"/>
    <property type="match status" value="1"/>
</dbReference>
<dbReference type="SUPFAM" id="SSF57716">
    <property type="entry name" value="Glucocorticoid receptor-like (DNA-binding domain)"/>
    <property type="match status" value="1"/>
</dbReference>
<dbReference type="SUPFAM" id="SSF81624">
    <property type="entry name" value="N-terminal domain of MutM-like DNA repair proteins"/>
    <property type="match status" value="1"/>
</dbReference>
<dbReference type="SUPFAM" id="SSF46946">
    <property type="entry name" value="S13-like H2TH domain"/>
    <property type="match status" value="1"/>
</dbReference>
<dbReference type="PROSITE" id="PS51068">
    <property type="entry name" value="FPG_CAT"/>
    <property type="match status" value="1"/>
</dbReference>
<dbReference type="PROSITE" id="PS01242">
    <property type="entry name" value="ZF_FPG_1"/>
    <property type="match status" value="1"/>
</dbReference>
<dbReference type="PROSITE" id="PS51066">
    <property type="entry name" value="ZF_FPG_2"/>
    <property type="match status" value="1"/>
</dbReference>
<comment type="function">
    <text evidence="2">Involved in base excision repair of DNA damaged by oxidation or by mutagenic agents. Acts as a DNA glycosylase that recognizes and removes damaged bases. Has a preference for oxidized purines, such as 7,8-dihydro-8-oxoguanine (8-oxoG). Has AP (apurinic/apyrimidinic) lyase activity and introduces nicks in the DNA strand. Cleaves the DNA backbone by beta-delta elimination to generate a single-strand break at the site of the removed base with both 3'- and 5'-phosphates.</text>
</comment>
<comment type="catalytic activity">
    <reaction evidence="2">
        <text>Hydrolysis of DNA containing ring-opened 7-methylguanine residues, releasing 2,6-diamino-4-hydroxy-5-(N-methyl)formamidopyrimidine.</text>
        <dbReference type="EC" id="3.2.2.23"/>
    </reaction>
</comment>
<comment type="catalytic activity">
    <reaction evidence="2">
        <text>2'-deoxyribonucleotide-(2'-deoxyribose 5'-phosphate)-2'-deoxyribonucleotide-DNA = a 3'-end 2'-deoxyribonucleotide-(2,3-dehydro-2,3-deoxyribose 5'-phosphate)-DNA + a 5'-end 5'-phospho-2'-deoxyribonucleoside-DNA + H(+)</text>
        <dbReference type="Rhea" id="RHEA:66592"/>
        <dbReference type="Rhea" id="RHEA-COMP:13180"/>
        <dbReference type="Rhea" id="RHEA-COMP:16897"/>
        <dbReference type="Rhea" id="RHEA-COMP:17067"/>
        <dbReference type="ChEBI" id="CHEBI:15378"/>
        <dbReference type="ChEBI" id="CHEBI:136412"/>
        <dbReference type="ChEBI" id="CHEBI:157695"/>
        <dbReference type="ChEBI" id="CHEBI:167181"/>
        <dbReference type="EC" id="4.2.99.18"/>
    </reaction>
</comment>
<comment type="cofactor">
    <cofactor evidence="2">
        <name>Zn(2+)</name>
        <dbReference type="ChEBI" id="CHEBI:29105"/>
    </cofactor>
    <text evidence="2">Binds 1 zinc ion per subunit.</text>
</comment>
<comment type="subunit">
    <text evidence="2">Monomer.</text>
</comment>
<comment type="similarity">
    <text evidence="2">Belongs to the FPG family.</text>
</comment>
<evidence type="ECO:0000250" key="1"/>
<evidence type="ECO:0000255" key="2">
    <source>
        <dbReference type="HAMAP-Rule" id="MF_00103"/>
    </source>
</evidence>
<feature type="initiator methionine" description="Removed" evidence="1">
    <location>
        <position position="1"/>
    </location>
</feature>
<feature type="chain" id="PRO_0000228473" description="Formamidopyrimidine-DNA glycosylase">
    <location>
        <begin position="2"/>
        <end position="273"/>
    </location>
</feature>
<feature type="zinc finger region" description="FPG-type" evidence="2">
    <location>
        <begin position="238"/>
        <end position="272"/>
    </location>
</feature>
<feature type="active site" description="Schiff-base intermediate with DNA" evidence="2">
    <location>
        <position position="2"/>
    </location>
</feature>
<feature type="active site" description="Proton donor" evidence="2">
    <location>
        <position position="3"/>
    </location>
</feature>
<feature type="active site" description="Proton donor; for beta-elimination activity" evidence="2">
    <location>
        <position position="58"/>
    </location>
</feature>
<feature type="active site" description="Proton donor; for delta-elimination activity" evidence="2">
    <location>
        <position position="262"/>
    </location>
</feature>
<feature type="binding site" evidence="2">
    <location>
        <position position="91"/>
    </location>
    <ligand>
        <name>DNA</name>
        <dbReference type="ChEBI" id="CHEBI:16991"/>
    </ligand>
</feature>
<feature type="binding site" evidence="2">
    <location>
        <position position="110"/>
    </location>
    <ligand>
        <name>DNA</name>
        <dbReference type="ChEBI" id="CHEBI:16991"/>
    </ligand>
</feature>
<sequence length="273" mass="31034">MPELPEVETVRKGLERLVVNQEIASITIKVPKMVKTDLNDFMISLPGKTIQQVLRRGKYLLFDFGEMVMVSHLRMEGKYLLFPNKVPDNKHFHLYFKLTNGSTLVYQDVRKFGTFELVRKSSLKDYFTQKKLGPEPTADTFQFEPFSKGLANSKKPIKPLLLDQRLVAGLGNIYVDEVLWAAKIHPQRLANQLTESETSLLHKEIIRILTLGIEKGGSTIRTYKNALGEDGTMQKYLQVYGKTGQPCPRCGCLIKKIKVGGRGTHYCPRCQCL</sequence>
<organism>
    <name type="scientific">Streptococcus agalactiae serotype Ia (strain ATCC 27591 / A909 / CDC SS700)</name>
    <dbReference type="NCBI Taxonomy" id="205921"/>
    <lineage>
        <taxon>Bacteria</taxon>
        <taxon>Bacillati</taxon>
        <taxon>Bacillota</taxon>
        <taxon>Bacilli</taxon>
        <taxon>Lactobacillales</taxon>
        <taxon>Streptococcaceae</taxon>
        <taxon>Streptococcus</taxon>
    </lineage>
</organism>
<accession>Q3K028</accession>